<accession>Q3KLP4</accession>
<proteinExistence type="inferred from homology"/>
<reference key="1">
    <citation type="journal article" date="2005" name="Infect. Immun.">
        <title>Comparative genomic analysis of Chlamydia trachomatis oculotropic and genitotropic strains.</title>
        <authorList>
            <person name="Carlson J.H."/>
            <person name="Porcella S.F."/>
            <person name="McClarty G."/>
            <person name="Caldwell H.D."/>
        </authorList>
    </citation>
    <scope>NUCLEOTIDE SEQUENCE [LARGE SCALE GENOMIC DNA]</scope>
    <source>
        <strain>ATCC VR-571B / DSM 19440 / HAR-13</strain>
    </source>
</reference>
<comment type="catalytic activity">
    <reaction evidence="1">
        <text>tRNA(Arg) + L-arginine + ATP = L-arginyl-tRNA(Arg) + AMP + diphosphate</text>
        <dbReference type="Rhea" id="RHEA:20301"/>
        <dbReference type="Rhea" id="RHEA-COMP:9658"/>
        <dbReference type="Rhea" id="RHEA-COMP:9673"/>
        <dbReference type="ChEBI" id="CHEBI:30616"/>
        <dbReference type="ChEBI" id="CHEBI:32682"/>
        <dbReference type="ChEBI" id="CHEBI:33019"/>
        <dbReference type="ChEBI" id="CHEBI:78442"/>
        <dbReference type="ChEBI" id="CHEBI:78513"/>
        <dbReference type="ChEBI" id="CHEBI:456215"/>
        <dbReference type="EC" id="6.1.1.19"/>
    </reaction>
</comment>
<comment type="subunit">
    <text evidence="1">Monomer.</text>
</comment>
<comment type="subcellular location">
    <subcellularLocation>
        <location evidence="1">Cytoplasm</location>
    </subcellularLocation>
</comment>
<comment type="similarity">
    <text evidence="1">Belongs to the class-I aminoacyl-tRNA synthetase family.</text>
</comment>
<organism>
    <name type="scientific">Chlamydia trachomatis serovar A (strain ATCC VR-571B / DSM 19440 / HAR-13)</name>
    <dbReference type="NCBI Taxonomy" id="315277"/>
    <lineage>
        <taxon>Bacteria</taxon>
        <taxon>Pseudomonadati</taxon>
        <taxon>Chlamydiota</taxon>
        <taxon>Chlamydiia</taxon>
        <taxon>Chlamydiales</taxon>
        <taxon>Chlamydiaceae</taxon>
        <taxon>Chlamydia/Chlamydophila group</taxon>
        <taxon>Chlamydia</taxon>
    </lineage>
</organism>
<sequence length="563" mass="63071">MTTLLSFLTSLCSAAIHQAFPELEELTLDITPSTKEHFGHYQCNDAMKLARVLRKSPRAIAESIVAHIPPAPFSSIEIAGAGFINFTFSKEFLASQLQTFSKELANGFRAASPQKVIIDFSSPNIAKDMHVGHLRSTIIGDCLARCFSFVGHDVLRLNHIGDWGTAFGMLITYLQETSQEAIHQLEDLTALYKKAHARFAEDSEFKKRSQHNVVALQSGDAQALALWKQICSVSEKSFQTIYSILDVELHTRGESFYNPFLAEVVADLESKNLVTLSDGAKCVFHEAFSIPLMIQKSDGGYNYATTDVAAMRYRIQQDQADRILIVTDSGQSLHFQLLEATCLAAGYLPSKGIFSHVGFGLVLDTQGRKFKTRSGENIKLRELLDTAVEKAKESLKAHRPDISEEELAYQGPILGINAIKYADLSSHRINDYVFSFEKMLRFEGNTAMSLLYAYVRIQGIKRRMGLESLPQEEPLAIHEPAEEALALTLLRFPEILDLTLRELCPHFLTDYLYALTNKFNAFFRDCHIEGSDSQQERLYLCGLTERTLSTGMHLLGLKTLNHL</sequence>
<evidence type="ECO:0000255" key="1">
    <source>
        <dbReference type="HAMAP-Rule" id="MF_00123"/>
    </source>
</evidence>
<dbReference type="EC" id="6.1.1.19" evidence="1"/>
<dbReference type="EMBL" id="CP000051">
    <property type="protein sequence ID" value="AAX50728.1"/>
    <property type="molecule type" value="Genomic_DNA"/>
</dbReference>
<dbReference type="RefSeq" id="WP_011324741.1">
    <property type="nucleotide sequence ID" value="NC_007429.1"/>
</dbReference>
<dbReference type="SMR" id="Q3KLP4"/>
<dbReference type="KEGG" id="cta:CTA_0496"/>
<dbReference type="HOGENOM" id="CLU_006406_5_1_0"/>
<dbReference type="Proteomes" id="UP000002532">
    <property type="component" value="Chromosome"/>
</dbReference>
<dbReference type="GO" id="GO:0005737">
    <property type="term" value="C:cytoplasm"/>
    <property type="evidence" value="ECO:0007669"/>
    <property type="project" value="UniProtKB-SubCell"/>
</dbReference>
<dbReference type="GO" id="GO:0004814">
    <property type="term" value="F:arginine-tRNA ligase activity"/>
    <property type="evidence" value="ECO:0007669"/>
    <property type="project" value="UniProtKB-UniRule"/>
</dbReference>
<dbReference type="GO" id="GO:0005524">
    <property type="term" value="F:ATP binding"/>
    <property type="evidence" value="ECO:0007669"/>
    <property type="project" value="UniProtKB-UniRule"/>
</dbReference>
<dbReference type="GO" id="GO:0006420">
    <property type="term" value="P:arginyl-tRNA aminoacylation"/>
    <property type="evidence" value="ECO:0007669"/>
    <property type="project" value="UniProtKB-UniRule"/>
</dbReference>
<dbReference type="CDD" id="cd00671">
    <property type="entry name" value="ArgRS_core"/>
    <property type="match status" value="1"/>
</dbReference>
<dbReference type="FunFam" id="3.40.50.620:FF:000030">
    <property type="entry name" value="Arginine--tRNA ligase"/>
    <property type="match status" value="1"/>
</dbReference>
<dbReference type="FunFam" id="3.30.1360.70:FF:000002">
    <property type="entry name" value="arginine--tRNA ligase, cytoplasmic"/>
    <property type="match status" value="1"/>
</dbReference>
<dbReference type="FunFam" id="1.10.730.10:FF:000006">
    <property type="entry name" value="Arginyl-tRNA synthetase 2, mitochondrial"/>
    <property type="match status" value="1"/>
</dbReference>
<dbReference type="Gene3D" id="3.30.1360.70">
    <property type="entry name" value="Arginyl tRNA synthetase N-terminal domain"/>
    <property type="match status" value="1"/>
</dbReference>
<dbReference type="Gene3D" id="3.40.50.620">
    <property type="entry name" value="HUPs"/>
    <property type="match status" value="1"/>
</dbReference>
<dbReference type="Gene3D" id="1.10.730.10">
    <property type="entry name" value="Isoleucyl-tRNA Synthetase, Domain 1"/>
    <property type="match status" value="1"/>
</dbReference>
<dbReference type="HAMAP" id="MF_00123">
    <property type="entry name" value="Arg_tRNA_synth"/>
    <property type="match status" value="1"/>
</dbReference>
<dbReference type="InterPro" id="IPR001412">
    <property type="entry name" value="aa-tRNA-synth_I_CS"/>
</dbReference>
<dbReference type="InterPro" id="IPR001278">
    <property type="entry name" value="Arg-tRNA-ligase"/>
</dbReference>
<dbReference type="InterPro" id="IPR005148">
    <property type="entry name" value="Arg-tRNA-synth_N"/>
</dbReference>
<dbReference type="InterPro" id="IPR036695">
    <property type="entry name" value="Arg-tRNA-synth_N_sf"/>
</dbReference>
<dbReference type="InterPro" id="IPR035684">
    <property type="entry name" value="ArgRS_core"/>
</dbReference>
<dbReference type="InterPro" id="IPR008909">
    <property type="entry name" value="DALR_anticod-bd"/>
</dbReference>
<dbReference type="InterPro" id="IPR014729">
    <property type="entry name" value="Rossmann-like_a/b/a_fold"/>
</dbReference>
<dbReference type="InterPro" id="IPR009080">
    <property type="entry name" value="tRNAsynth_Ia_anticodon-bd"/>
</dbReference>
<dbReference type="NCBIfam" id="TIGR00456">
    <property type="entry name" value="argS"/>
    <property type="match status" value="1"/>
</dbReference>
<dbReference type="PANTHER" id="PTHR11956:SF5">
    <property type="entry name" value="ARGININE--TRNA LIGASE, CYTOPLASMIC"/>
    <property type="match status" value="1"/>
</dbReference>
<dbReference type="PANTHER" id="PTHR11956">
    <property type="entry name" value="ARGINYL-TRNA SYNTHETASE"/>
    <property type="match status" value="1"/>
</dbReference>
<dbReference type="Pfam" id="PF03485">
    <property type="entry name" value="Arg_tRNA_synt_N"/>
    <property type="match status" value="1"/>
</dbReference>
<dbReference type="Pfam" id="PF05746">
    <property type="entry name" value="DALR_1"/>
    <property type="match status" value="1"/>
</dbReference>
<dbReference type="Pfam" id="PF00750">
    <property type="entry name" value="tRNA-synt_1d"/>
    <property type="match status" value="1"/>
</dbReference>
<dbReference type="PRINTS" id="PR01038">
    <property type="entry name" value="TRNASYNTHARG"/>
</dbReference>
<dbReference type="SMART" id="SM01016">
    <property type="entry name" value="Arg_tRNA_synt_N"/>
    <property type="match status" value="1"/>
</dbReference>
<dbReference type="SMART" id="SM00836">
    <property type="entry name" value="DALR_1"/>
    <property type="match status" value="1"/>
</dbReference>
<dbReference type="SUPFAM" id="SSF47323">
    <property type="entry name" value="Anticodon-binding domain of a subclass of class I aminoacyl-tRNA synthetases"/>
    <property type="match status" value="1"/>
</dbReference>
<dbReference type="SUPFAM" id="SSF55190">
    <property type="entry name" value="Arginyl-tRNA synthetase (ArgRS), N-terminal 'additional' domain"/>
    <property type="match status" value="1"/>
</dbReference>
<dbReference type="SUPFAM" id="SSF52374">
    <property type="entry name" value="Nucleotidylyl transferase"/>
    <property type="match status" value="1"/>
</dbReference>
<dbReference type="PROSITE" id="PS00178">
    <property type="entry name" value="AA_TRNA_LIGASE_I"/>
    <property type="match status" value="1"/>
</dbReference>
<name>SYR_CHLTA</name>
<feature type="chain" id="PRO_0000242004" description="Arginine--tRNA ligase">
    <location>
        <begin position="1"/>
        <end position="563"/>
    </location>
</feature>
<feature type="short sequence motif" description="'HIGH' region">
    <location>
        <begin position="123"/>
        <end position="133"/>
    </location>
</feature>
<gene>
    <name evidence="1" type="primary">argS</name>
    <name type="ordered locus">CTA_0496</name>
</gene>
<protein>
    <recommendedName>
        <fullName evidence="1">Arginine--tRNA ligase</fullName>
        <ecNumber evidence="1">6.1.1.19</ecNumber>
    </recommendedName>
    <alternativeName>
        <fullName evidence="1">Arginyl-tRNA synthetase</fullName>
        <shortName evidence="1">ArgRS</shortName>
    </alternativeName>
</protein>
<keyword id="KW-0030">Aminoacyl-tRNA synthetase</keyword>
<keyword id="KW-0067">ATP-binding</keyword>
<keyword id="KW-0963">Cytoplasm</keyword>
<keyword id="KW-0436">Ligase</keyword>
<keyword id="KW-0547">Nucleotide-binding</keyword>
<keyword id="KW-0648">Protein biosynthesis</keyword>